<feature type="chain" id="PRO_0000338498" description="Molybdate/tungstate transport system permease protein WtpB">
    <location>
        <begin position="1"/>
        <end position="249"/>
    </location>
</feature>
<feature type="topological domain" description="Cytoplasmic" evidence="1">
    <location>
        <begin position="1"/>
        <end position="10"/>
    </location>
</feature>
<feature type="transmembrane region" description="Helical" evidence="2">
    <location>
        <begin position="11"/>
        <end position="31"/>
    </location>
</feature>
<feature type="topological domain" description="Extracellular" evidence="1">
    <location>
        <begin position="32"/>
        <end position="56"/>
    </location>
</feature>
<feature type="transmembrane region" description="Helical" evidence="2">
    <location>
        <begin position="57"/>
        <end position="77"/>
    </location>
</feature>
<feature type="topological domain" description="Cytoplasmic" evidence="1">
    <location>
        <begin position="78"/>
        <end position="96"/>
    </location>
</feature>
<feature type="transmembrane region" description="Helical" evidence="2">
    <location>
        <begin position="97"/>
        <end position="117"/>
    </location>
</feature>
<feature type="topological domain" description="Extracellular" evidence="1">
    <location>
        <position position="118"/>
    </location>
</feature>
<feature type="transmembrane region" description="Helical" evidence="2">
    <location>
        <begin position="119"/>
        <end position="139"/>
    </location>
</feature>
<feature type="topological domain" description="Cytoplasmic" evidence="1">
    <location>
        <begin position="140"/>
        <end position="179"/>
    </location>
</feature>
<feature type="transmembrane region" description="Helical" evidence="2">
    <location>
        <begin position="180"/>
        <end position="200"/>
    </location>
</feature>
<feature type="topological domain" description="Extracellular" evidence="1">
    <location>
        <begin position="201"/>
        <end position="223"/>
    </location>
</feature>
<feature type="transmembrane region" description="Helical" evidence="2">
    <location>
        <begin position="224"/>
        <end position="244"/>
    </location>
</feature>
<feature type="topological domain" description="Cytoplasmic" evidence="1">
    <location>
        <begin position="245"/>
        <end position="249"/>
    </location>
</feature>
<feature type="domain" description="ABC transmembrane type-1" evidence="2">
    <location>
        <begin position="53"/>
        <end position="239"/>
    </location>
</feature>
<name>WTPB_PYRFU</name>
<protein>
    <recommendedName>
        <fullName evidence="4">Molybdate/tungstate transport system permease protein WtpB</fullName>
    </recommendedName>
</protein>
<dbReference type="EMBL" id="AE009950">
    <property type="protein sequence ID" value="AAL80205.1"/>
    <property type="status" value="ALT_INIT"/>
    <property type="molecule type" value="Genomic_DNA"/>
</dbReference>
<dbReference type="RefSeq" id="WP_014835477.1">
    <property type="nucleotide sequence ID" value="NZ_CP023154.1"/>
</dbReference>
<dbReference type="SMR" id="Q8U4K4"/>
<dbReference type="STRING" id="186497.PF0081"/>
<dbReference type="TCDB" id="3.A.1.6.5">
    <property type="family name" value="the atp-binding cassette (abc) superfamily"/>
</dbReference>
<dbReference type="PaxDb" id="186497-PF0081"/>
<dbReference type="GeneID" id="41711869"/>
<dbReference type="KEGG" id="pfu:PF0081"/>
<dbReference type="PATRIC" id="fig|186497.12.peg.85"/>
<dbReference type="eggNOG" id="arCOG00164">
    <property type="taxonomic scope" value="Archaea"/>
</dbReference>
<dbReference type="HOGENOM" id="CLU_016047_14_1_2"/>
<dbReference type="OrthoDB" id="11163at2157"/>
<dbReference type="Proteomes" id="UP000001013">
    <property type="component" value="Chromosome"/>
</dbReference>
<dbReference type="GO" id="GO:0005886">
    <property type="term" value="C:plasma membrane"/>
    <property type="evidence" value="ECO:0007669"/>
    <property type="project" value="UniProtKB-SubCell"/>
</dbReference>
<dbReference type="GO" id="GO:0055085">
    <property type="term" value="P:transmembrane transport"/>
    <property type="evidence" value="ECO:0007669"/>
    <property type="project" value="InterPro"/>
</dbReference>
<dbReference type="CDD" id="cd06261">
    <property type="entry name" value="TM_PBP2"/>
    <property type="match status" value="1"/>
</dbReference>
<dbReference type="Gene3D" id="1.10.3720.10">
    <property type="entry name" value="MetI-like"/>
    <property type="match status" value="1"/>
</dbReference>
<dbReference type="InterPro" id="IPR000515">
    <property type="entry name" value="MetI-like"/>
</dbReference>
<dbReference type="InterPro" id="IPR035906">
    <property type="entry name" value="MetI-like_sf"/>
</dbReference>
<dbReference type="InterPro" id="IPR053405">
    <property type="entry name" value="Mo/W_ABC_Transporter_Permease"/>
</dbReference>
<dbReference type="NCBIfam" id="NF040839">
    <property type="entry name" value="tungstate_WtpB"/>
    <property type="match status" value="1"/>
</dbReference>
<dbReference type="PANTHER" id="PTHR30183">
    <property type="entry name" value="MOLYBDENUM TRANSPORT SYSTEM PERMEASE PROTEIN MODB"/>
    <property type="match status" value="1"/>
</dbReference>
<dbReference type="PANTHER" id="PTHR30183:SF3">
    <property type="entry name" value="MOLYBDENUM TRANSPORT SYSTEM PERMEASE PROTEIN MODB"/>
    <property type="match status" value="1"/>
</dbReference>
<dbReference type="Pfam" id="PF00528">
    <property type="entry name" value="BPD_transp_1"/>
    <property type="match status" value="1"/>
</dbReference>
<dbReference type="SUPFAM" id="SSF161098">
    <property type="entry name" value="MetI-like"/>
    <property type="match status" value="1"/>
</dbReference>
<dbReference type="PROSITE" id="PS50928">
    <property type="entry name" value="ABC_TM1"/>
    <property type="match status" value="1"/>
</dbReference>
<reference key="1">
    <citation type="journal article" date="1999" name="Genetics">
        <title>Divergence of the hyperthermophilic archaea Pyrococcus furiosus and P. horikoshii inferred from complete genomic sequences.</title>
        <authorList>
            <person name="Maeder D.L."/>
            <person name="Weiss R.B."/>
            <person name="Dunn D.M."/>
            <person name="Cherry J.L."/>
            <person name="Gonzalez J.M."/>
            <person name="DiRuggiero J."/>
            <person name="Robb F.T."/>
        </authorList>
    </citation>
    <scope>NUCLEOTIDE SEQUENCE [LARGE SCALE GENOMIC DNA]</scope>
    <source>
        <strain>ATCC 43587 / DSM 3638 / JCM 8422 / Vc1</strain>
    </source>
</reference>
<reference key="2">
    <citation type="journal article" date="2006" name="J. Bacteriol.">
        <title>Tungsten transport protein A (WtpA) in Pyrococcus furiosus: the first member of a new class of tungstate and molybdate transporters.</title>
        <authorList>
            <person name="Bevers L.E."/>
            <person name="Hagedoorn P.-L."/>
            <person name="Krijger G.C."/>
            <person name="Hagen W.R."/>
        </authorList>
    </citation>
    <scope>PROBABLE FUNCTION</scope>
    <scope>GENE NAME</scope>
</reference>
<keyword id="KW-1003">Cell membrane</keyword>
<keyword id="KW-0472">Membrane</keyword>
<keyword id="KW-0500">Molybdenum</keyword>
<keyword id="KW-1185">Reference proteome</keyword>
<keyword id="KW-0812">Transmembrane</keyword>
<keyword id="KW-1133">Transmembrane helix</keyword>
<keyword id="KW-0813">Transport</keyword>
<gene>
    <name evidence="3" type="primary">wtpB</name>
    <name type="ordered locus">PF0081</name>
</gene>
<evidence type="ECO:0000255" key="1"/>
<evidence type="ECO:0000255" key="2">
    <source>
        <dbReference type="PROSITE-ProRule" id="PRU00441"/>
    </source>
</evidence>
<evidence type="ECO:0000303" key="3">
    <source>
    </source>
</evidence>
<evidence type="ECO:0000305" key="4"/>
<evidence type="ECO:0000305" key="5">
    <source>
    </source>
</evidence>
<organism>
    <name type="scientific">Pyrococcus furiosus (strain ATCC 43587 / DSM 3638 / JCM 8422 / Vc1)</name>
    <dbReference type="NCBI Taxonomy" id="186497"/>
    <lineage>
        <taxon>Archaea</taxon>
        <taxon>Methanobacteriati</taxon>
        <taxon>Methanobacteriota</taxon>
        <taxon>Thermococci</taxon>
        <taxon>Thermococcales</taxon>
        <taxon>Thermococcaceae</taxon>
        <taxon>Pyrococcus</taxon>
    </lineage>
</organism>
<sequence length="249" mass="27336">MDRRDYLAYAFAGLGAFLVAFIGLPLFMIFIKQAYDLEALQRTLVDPLVIESIRNSLFTATVSTLLGILFGVPLGYVLARKEFKGKNFVQALIDTPIVIPHSVVGIMLLVTFSDAILDNYKGIVAVMLFVSSPFIVNSARDGFLSVDEKLEYVARTLGASGLRTFFSVTLPNAIHSIASGAIMAWARAISEVGAILIVAYYPKTAQVLIMEYFNNYGLRASRPIAVILVTISLAVFIFLRWLVGRGRNA</sequence>
<proteinExistence type="inferred from homology"/>
<accession>Q8U4K4</accession>
<comment type="function">
    <text evidence="5">Part of the ABC transporter complex WtpABC involved in molybdate/tungstate import. Probably responsible for the translocation of the substrate across the membrane.</text>
</comment>
<comment type="subunit">
    <text evidence="4">The complex is composed of two ATP-binding proteins (WtpC), two transmembrane proteins (WtpB) and a solute-binding protein (WtpA).</text>
</comment>
<comment type="subcellular location">
    <subcellularLocation>
        <location evidence="4">Cell membrane</location>
        <topology evidence="1">Multi-pass membrane protein</topology>
    </subcellularLocation>
</comment>
<comment type="similarity">
    <text evidence="4">Belongs to the binding-protein-dependent transport system permease family.</text>
</comment>
<comment type="sequence caution" evidence="4">
    <conflict type="erroneous initiation">
        <sequence resource="EMBL-CDS" id="AAL80205"/>
    </conflict>
</comment>